<reference key="1">
    <citation type="journal article" date="2007" name="Nat. Biotechnol.">
        <title>Complete genome sequence of the fish pathogen Flavobacterium psychrophilum.</title>
        <authorList>
            <person name="Duchaud E."/>
            <person name="Boussaha M."/>
            <person name="Loux V."/>
            <person name="Bernardet J.-F."/>
            <person name="Michel C."/>
            <person name="Kerouault B."/>
            <person name="Mondot S."/>
            <person name="Nicolas P."/>
            <person name="Bossy R."/>
            <person name="Caron C."/>
            <person name="Bessieres P."/>
            <person name="Gibrat J.-F."/>
            <person name="Claverol S."/>
            <person name="Dumetz F."/>
            <person name="Le Henaff M."/>
            <person name="Benmansour A."/>
        </authorList>
    </citation>
    <scope>NUCLEOTIDE SEQUENCE [LARGE SCALE GENOMIC DNA]</scope>
    <source>
        <strain>ATCC 49511 / DSM 21280 / CIP 103535 / JIP02/86</strain>
    </source>
</reference>
<accession>A6H1G3</accession>
<feature type="chain" id="PRO_1000001405" description="Holliday junction branch migration complex subunit RuvB">
    <location>
        <begin position="1"/>
        <end position="340"/>
    </location>
</feature>
<feature type="region of interest" description="Large ATPase domain (RuvB-L)" evidence="1">
    <location>
        <begin position="1"/>
        <end position="184"/>
    </location>
</feature>
<feature type="region of interest" description="Small ATPAse domain (RuvB-S)" evidence="1">
    <location>
        <begin position="185"/>
        <end position="255"/>
    </location>
</feature>
<feature type="region of interest" description="Head domain (RuvB-H)" evidence="1">
    <location>
        <begin position="258"/>
        <end position="340"/>
    </location>
</feature>
<feature type="binding site" evidence="1">
    <location>
        <position position="23"/>
    </location>
    <ligand>
        <name>ATP</name>
        <dbReference type="ChEBI" id="CHEBI:30616"/>
    </ligand>
</feature>
<feature type="binding site" evidence="1">
    <location>
        <position position="24"/>
    </location>
    <ligand>
        <name>ATP</name>
        <dbReference type="ChEBI" id="CHEBI:30616"/>
    </ligand>
</feature>
<feature type="binding site" evidence="1">
    <location>
        <position position="65"/>
    </location>
    <ligand>
        <name>ATP</name>
        <dbReference type="ChEBI" id="CHEBI:30616"/>
    </ligand>
</feature>
<feature type="binding site" evidence="1">
    <location>
        <position position="68"/>
    </location>
    <ligand>
        <name>ATP</name>
        <dbReference type="ChEBI" id="CHEBI:30616"/>
    </ligand>
</feature>
<feature type="binding site" evidence="1">
    <location>
        <position position="69"/>
    </location>
    <ligand>
        <name>ATP</name>
        <dbReference type="ChEBI" id="CHEBI:30616"/>
    </ligand>
</feature>
<feature type="binding site" evidence="1">
    <location>
        <position position="69"/>
    </location>
    <ligand>
        <name>Mg(2+)</name>
        <dbReference type="ChEBI" id="CHEBI:18420"/>
    </ligand>
</feature>
<feature type="binding site" evidence="1">
    <location>
        <position position="70"/>
    </location>
    <ligand>
        <name>ATP</name>
        <dbReference type="ChEBI" id="CHEBI:30616"/>
    </ligand>
</feature>
<feature type="binding site" evidence="1">
    <location>
        <begin position="131"/>
        <end position="133"/>
    </location>
    <ligand>
        <name>ATP</name>
        <dbReference type="ChEBI" id="CHEBI:30616"/>
    </ligand>
</feature>
<feature type="binding site" evidence="1">
    <location>
        <position position="174"/>
    </location>
    <ligand>
        <name>ATP</name>
        <dbReference type="ChEBI" id="CHEBI:30616"/>
    </ligand>
</feature>
<feature type="binding site" evidence="1">
    <location>
        <position position="184"/>
    </location>
    <ligand>
        <name>ATP</name>
        <dbReference type="ChEBI" id="CHEBI:30616"/>
    </ligand>
</feature>
<feature type="binding site" evidence="1">
    <location>
        <position position="221"/>
    </location>
    <ligand>
        <name>ATP</name>
        <dbReference type="ChEBI" id="CHEBI:30616"/>
    </ligand>
</feature>
<feature type="binding site" evidence="1">
    <location>
        <position position="313"/>
    </location>
    <ligand>
        <name>DNA</name>
        <dbReference type="ChEBI" id="CHEBI:16991"/>
    </ligand>
</feature>
<feature type="binding site" evidence="1">
    <location>
        <position position="318"/>
    </location>
    <ligand>
        <name>DNA</name>
        <dbReference type="ChEBI" id="CHEBI:16991"/>
    </ligand>
</feature>
<dbReference type="EC" id="3.6.4.-" evidence="1"/>
<dbReference type="EMBL" id="AM398681">
    <property type="protein sequence ID" value="CAL44187.1"/>
    <property type="molecule type" value="Genomic_DNA"/>
</dbReference>
<dbReference type="RefSeq" id="WP_011964224.1">
    <property type="nucleotide sequence ID" value="NC_009613.3"/>
</dbReference>
<dbReference type="RefSeq" id="YP_001296989.1">
    <property type="nucleotide sequence ID" value="NC_009613.3"/>
</dbReference>
<dbReference type="SMR" id="A6H1G3"/>
<dbReference type="STRING" id="402612.FP2125"/>
<dbReference type="EnsemblBacteria" id="CAL44187">
    <property type="protein sequence ID" value="CAL44187"/>
    <property type="gene ID" value="FP2125"/>
</dbReference>
<dbReference type="GeneID" id="66551690"/>
<dbReference type="KEGG" id="fps:FP2125"/>
<dbReference type="PATRIC" id="fig|402612.5.peg.2153"/>
<dbReference type="eggNOG" id="COG2255">
    <property type="taxonomic scope" value="Bacteria"/>
</dbReference>
<dbReference type="HOGENOM" id="CLU_055599_1_0_10"/>
<dbReference type="OrthoDB" id="9804478at2"/>
<dbReference type="Proteomes" id="UP000006394">
    <property type="component" value="Chromosome"/>
</dbReference>
<dbReference type="GO" id="GO:0005737">
    <property type="term" value="C:cytoplasm"/>
    <property type="evidence" value="ECO:0007669"/>
    <property type="project" value="UniProtKB-SubCell"/>
</dbReference>
<dbReference type="GO" id="GO:0048476">
    <property type="term" value="C:Holliday junction resolvase complex"/>
    <property type="evidence" value="ECO:0007669"/>
    <property type="project" value="UniProtKB-UniRule"/>
</dbReference>
<dbReference type="GO" id="GO:0005524">
    <property type="term" value="F:ATP binding"/>
    <property type="evidence" value="ECO:0007669"/>
    <property type="project" value="UniProtKB-UniRule"/>
</dbReference>
<dbReference type="GO" id="GO:0016887">
    <property type="term" value="F:ATP hydrolysis activity"/>
    <property type="evidence" value="ECO:0007669"/>
    <property type="project" value="InterPro"/>
</dbReference>
<dbReference type="GO" id="GO:0000400">
    <property type="term" value="F:four-way junction DNA binding"/>
    <property type="evidence" value="ECO:0007669"/>
    <property type="project" value="UniProtKB-UniRule"/>
</dbReference>
<dbReference type="GO" id="GO:0009378">
    <property type="term" value="F:four-way junction helicase activity"/>
    <property type="evidence" value="ECO:0007669"/>
    <property type="project" value="InterPro"/>
</dbReference>
<dbReference type="GO" id="GO:0006310">
    <property type="term" value="P:DNA recombination"/>
    <property type="evidence" value="ECO:0007669"/>
    <property type="project" value="UniProtKB-UniRule"/>
</dbReference>
<dbReference type="GO" id="GO:0006281">
    <property type="term" value="P:DNA repair"/>
    <property type="evidence" value="ECO:0007669"/>
    <property type="project" value="UniProtKB-UniRule"/>
</dbReference>
<dbReference type="CDD" id="cd00009">
    <property type="entry name" value="AAA"/>
    <property type="match status" value="1"/>
</dbReference>
<dbReference type="Gene3D" id="1.10.8.60">
    <property type="match status" value="1"/>
</dbReference>
<dbReference type="Gene3D" id="3.40.50.300">
    <property type="entry name" value="P-loop containing nucleotide triphosphate hydrolases"/>
    <property type="match status" value="1"/>
</dbReference>
<dbReference type="Gene3D" id="1.10.10.10">
    <property type="entry name" value="Winged helix-like DNA-binding domain superfamily/Winged helix DNA-binding domain"/>
    <property type="match status" value="1"/>
</dbReference>
<dbReference type="HAMAP" id="MF_00016">
    <property type="entry name" value="DNA_HJ_migration_RuvB"/>
    <property type="match status" value="1"/>
</dbReference>
<dbReference type="InterPro" id="IPR003593">
    <property type="entry name" value="AAA+_ATPase"/>
</dbReference>
<dbReference type="InterPro" id="IPR041445">
    <property type="entry name" value="AAA_lid_4"/>
</dbReference>
<dbReference type="InterPro" id="IPR004605">
    <property type="entry name" value="DNA_helicase_Holl-junc_RuvB"/>
</dbReference>
<dbReference type="InterPro" id="IPR027417">
    <property type="entry name" value="P-loop_NTPase"/>
</dbReference>
<dbReference type="InterPro" id="IPR008824">
    <property type="entry name" value="RuvB-like_N"/>
</dbReference>
<dbReference type="InterPro" id="IPR008823">
    <property type="entry name" value="RuvB_C"/>
</dbReference>
<dbReference type="InterPro" id="IPR036388">
    <property type="entry name" value="WH-like_DNA-bd_sf"/>
</dbReference>
<dbReference type="InterPro" id="IPR036390">
    <property type="entry name" value="WH_DNA-bd_sf"/>
</dbReference>
<dbReference type="NCBIfam" id="NF000868">
    <property type="entry name" value="PRK00080.1"/>
    <property type="match status" value="1"/>
</dbReference>
<dbReference type="NCBIfam" id="TIGR00635">
    <property type="entry name" value="ruvB"/>
    <property type="match status" value="1"/>
</dbReference>
<dbReference type="PANTHER" id="PTHR42848">
    <property type="match status" value="1"/>
</dbReference>
<dbReference type="PANTHER" id="PTHR42848:SF1">
    <property type="entry name" value="HOLLIDAY JUNCTION BRANCH MIGRATION COMPLEX SUBUNIT RUVB"/>
    <property type="match status" value="1"/>
</dbReference>
<dbReference type="Pfam" id="PF17864">
    <property type="entry name" value="AAA_lid_4"/>
    <property type="match status" value="1"/>
</dbReference>
<dbReference type="Pfam" id="PF05491">
    <property type="entry name" value="RuvB_C"/>
    <property type="match status" value="1"/>
</dbReference>
<dbReference type="Pfam" id="PF05496">
    <property type="entry name" value="RuvB_N"/>
    <property type="match status" value="1"/>
</dbReference>
<dbReference type="SMART" id="SM00382">
    <property type="entry name" value="AAA"/>
    <property type="match status" value="1"/>
</dbReference>
<dbReference type="SUPFAM" id="SSF52540">
    <property type="entry name" value="P-loop containing nucleoside triphosphate hydrolases"/>
    <property type="match status" value="1"/>
</dbReference>
<dbReference type="SUPFAM" id="SSF46785">
    <property type="entry name" value="Winged helix' DNA-binding domain"/>
    <property type="match status" value="1"/>
</dbReference>
<comment type="function">
    <text evidence="1">The RuvA-RuvB-RuvC complex processes Holliday junction (HJ) DNA during genetic recombination and DNA repair, while the RuvA-RuvB complex plays an important role in the rescue of blocked DNA replication forks via replication fork reversal (RFR). RuvA specifically binds to HJ cruciform DNA, conferring on it an open structure. The RuvB hexamer acts as an ATP-dependent pump, pulling dsDNA into and through the RuvAB complex. RuvB forms 2 homohexamers on either side of HJ DNA bound by 1 or 2 RuvA tetramers; 4 subunits per hexamer contact DNA at a time. Coordinated motions by a converter formed by DNA-disengaged RuvB subunits stimulates ATP hydrolysis and nucleotide exchange. Immobilization of the converter enables RuvB to convert the ATP-contained energy into a lever motion, pulling 2 nucleotides of DNA out of the RuvA tetramer per ATP hydrolyzed, thus driving DNA branch migration. The RuvB motors rotate together with the DNA substrate, which together with the progressing nucleotide cycle form the mechanistic basis for DNA recombination by continuous HJ branch migration. Branch migration allows RuvC to scan DNA until it finds its consensus sequence, where it cleaves and resolves cruciform DNA.</text>
</comment>
<comment type="catalytic activity">
    <reaction evidence="1">
        <text>ATP + H2O = ADP + phosphate + H(+)</text>
        <dbReference type="Rhea" id="RHEA:13065"/>
        <dbReference type="ChEBI" id="CHEBI:15377"/>
        <dbReference type="ChEBI" id="CHEBI:15378"/>
        <dbReference type="ChEBI" id="CHEBI:30616"/>
        <dbReference type="ChEBI" id="CHEBI:43474"/>
        <dbReference type="ChEBI" id="CHEBI:456216"/>
    </reaction>
</comment>
<comment type="subunit">
    <text evidence="1">Homohexamer. Forms an RuvA(8)-RuvB(12)-Holliday junction (HJ) complex. HJ DNA is sandwiched between 2 RuvA tetramers; dsDNA enters through RuvA and exits via RuvB. An RuvB hexamer assembles on each DNA strand where it exits the tetramer. Each RuvB hexamer is contacted by two RuvA subunits (via domain III) on 2 adjacent RuvB subunits; this complex drives branch migration. In the full resolvosome a probable DNA-RuvA(4)-RuvB(12)-RuvC(2) complex forms which resolves the HJ.</text>
</comment>
<comment type="subcellular location">
    <subcellularLocation>
        <location evidence="1">Cytoplasm</location>
    </subcellularLocation>
</comment>
<comment type="domain">
    <text evidence="1">Has 3 domains, the large (RuvB-L) and small ATPase (RuvB-S) domains and the C-terminal head (RuvB-H) domain. The head domain binds DNA, while the ATPase domains jointly bind ATP, ADP or are empty depending on the state of the subunit in the translocation cycle. During a single DNA translocation step the structure of each domain remains the same, but their relative positions change.</text>
</comment>
<comment type="similarity">
    <text evidence="1">Belongs to the RuvB family.</text>
</comment>
<organism>
    <name type="scientific">Flavobacterium psychrophilum (strain ATCC 49511 / DSM 21280 / CIP 103535 / JIP02/86)</name>
    <dbReference type="NCBI Taxonomy" id="402612"/>
    <lineage>
        <taxon>Bacteria</taxon>
        <taxon>Pseudomonadati</taxon>
        <taxon>Bacteroidota</taxon>
        <taxon>Flavobacteriia</taxon>
        <taxon>Flavobacteriales</taxon>
        <taxon>Flavobacteriaceae</taxon>
        <taxon>Flavobacterium</taxon>
    </lineage>
</organism>
<name>RUVB_FLAPJ</name>
<proteinExistence type="inferred from homology"/>
<gene>
    <name evidence="1" type="primary">ruvB</name>
    <name type="ordered locus">FP2125</name>
</gene>
<sequence>MNENLDPTNQKYNPEELDLEKKLRPLSFDDFTGQEQVLENLKIFVQAANLRGEALDHTLFHGPPGLGKTTLANILANELGVGIKITSGPVLDKPGDLAGLLTNLDERDVLFIDEIHRLSPIVEEYLYSAMEDFKIDIMIESGPNARSVQINLSPFTLVGATTRSGLLTAPMRARFGIQSRLQYYNAELLTTIVQRSSSILKMPITMEAAIEIAGRSRGTPRIANAMLRRVRDFAQIKGNGSIDIEIAKFALNALHVDAHGLDEMDNKILNTIIDKFKGGPVGLSTLATAVSESSETIEEVYEPFLIQEGFIMRTPRGREVTEKAYKHLGKVKANVQGGLF</sequence>
<keyword id="KW-0067">ATP-binding</keyword>
<keyword id="KW-0963">Cytoplasm</keyword>
<keyword id="KW-0227">DNA damage</keyword>
<keyword id="KW-0233">DNA recombination</keyword>
<keyword id="KW-0234">DNA repair</keyword>
<keyword id="KW-0238">DNA-binding</keyword>
<keyword id="KW-0378">Hydrolase</keyword>
<keyword id="KW-0547">Nucleotide-binding</keyword>
<keyword id="KW-1185">Reference proteome</keyword>
<evidence type="ECO:0000255" key="1">
    <source>
        <dbReference type="HAMAP-Rule" id="MF_00016"/>
    </source>
</evidence>
<protein>
    <recommendedName>
        <fullName evidence="1">Holliday junction branch migration complex subunit RuvB</fullName>
        <ecNumber evidence="1">3.6.4.-</ecNumber>
    </recommendedName>
</protein>